<dbReference type="EMBL" id="DS027054">
    <property type="protein sequence ID" value="EAW10270.1"/>
    <property type="molecule type" value="Genomic_DNA"/>
</dbReference>
<dbReference type="RefSeq" id="XP_001271696.1">
    <property type="nucleotide sequence ID" value="XM_001271695.1"/>
</dbReference>
<dbReference type="SMR" id="A1CHB5"/>
<dbReference type="STRING" id="344612.A1CHB5"/>
<dbReference type="EnsemblFungi" id="EAW10270">
    <property type="protein sequence ID" value="EAW10270"/>
    <property type="gene ID" value="ACLA_047390"/>
</dbReference>
<dbReference type="GeneID" id="4704330"/>
<dbReference type="KEGG" id="act:ACLA_047390"/>
<dbReference type="VEuPathDB" id="FungiDB:ACLA_047390"/>
<dbReference type="eggNOG" id="KOG1854">
    <property type="taxonomic scope" value="Eukaryota"/>
</dbReference>
<dbReference type="HOGENOM" id="CLU_008024_1_2_1"/>
<dbReference type="OMA" id="RLDHQMQ"/>
<dbReference type="OrthoDB" id="10261039at2759"/>
<dbReference type="Proteomes" id="UP000006701">
    <property type="component" value="Unassembled WGS sequence"/>
</dbReference>
<dbReference type="GO" id="GO:0061617">
    <property type="term" value="C:MICOS complex"/>
    <property type="evidence" value="ECO:0007669"/>
    <property type="project" value="TreeGrafter"/>
</dbReference>
<dbReference type="GO" id="GO:0042407">
    <property type="term" value="P:cristae formation"/>
    <property type="evidence" value="ECO:0007669"/>
    <property type="project" value="TreeGrafter"/>
</dbReference>
<dbReference type="InterPro" id="IPR019133">
    <property type="entry name" value="MIC60"/>
</dbReference>
<dbReference type="PANTHER" id="PTHR15415:SF7">
    <property type="entry name" value="MICOS COMPLEX SUBUNIT MIC60"/>
    <property type="match status" value="1"/>
</dbReference>
<dbReference type="PANTHER" id="PTHR15415">
    <property type="entry name" value="MITOFILIN"/>
    <property type="match status" value="1"/>
</dbReference>
<dbReference type="Pfam" id="PF09731">
    <property type="entry name" value="Mitofilin"/>
    <property type="match status" value="2"/>
</dbReference>
<proteinExistence type="inferred from homology"/>
<reference key="1">
    <citation type="journal article" date="2008" name="PLoS Genet.">
        <title>Genomic islands in the pathogenic filamentous fungus Aspergillus fumigatus.</title>
        <authorList>
            <person name="Fedorova N.D."/>
            <person name="Khaldi N."/>
            <person name="Joardar V.S."/>
            <person name="Maiti R."/>
            <person name="Amedeo P."/>
            <person name="Anderson M.J."/>
            <person name="Crabtree J."/>
            <person name="Silva J.C."/>
            <person name="Badger J.H."/>
            <person name="Albarraq A."/>
            <person name="Angiuoli S."/>
            <person name="Bussey H."/>
            <person name="Bowyer P."/>
            <person name="Cotty P.J."/>
            <person name="Dyer P.S."/>
            <person name="Egan A."/>
            <person name="Galens K."/>
            <person name="Fraser-Liggett C.M."/>
            <person name="Haas B.J."/>
            <person name="Inman J.M."/>
            <person name="Kent R."/>
            <person name="Lemieux S."/>
            <person name="Malavazi I."/>
            <person name="Orvis J."/>
            <person name="Roemer T."/>
            <person name="Ronning C.M."/>
            <person name="Sundaram J.P."/>
            <person name="Sutton G."/>
            <person name="Turner G."/>
            <person name="Venter J.C."/>
            <person name="White O.R."/>
            <person name="Whitty B.R."/>
            <person name="Youngman P."/>
            <person name="Wolfe K.H."/>
            <person name="Goldman G.H."/>
            <person name="Wortman J.R."/>
            <person name="Jiang B."/>
            <person name="Denning D.W."/>
            <person name="Nierman W.C."/>
        </authorList>
    </citation>
    <scope>NUCLEOTIDE SEQUENCE [LARGE SCALE GENOMIC DNA]</scope>
    <source>
        <strain>ATCC 1007 / CBS 513.65 / DSM 816 / NCTC 3887 / NRRL 1 / QM 1276 / 107</strain>
    </source>
</reference>
<sequence>MLRSSITQSRQLLLSPARSRTASQWLPRAGASNRISGQRFFADVKPPVVPGAPTPASPSSDTPIPPETVPKSTLADEATLPPPPPPPPAPVRKTGRFRRFLIYLILTSGFAYGGGIFLAMKSDNFHDFFTEYVPYGEDCVLYFEERDFYRRFPNTLRNANRAPKDEGNKVTIPSKSGLSWKVAEEESGADLSAKGPHMSAVEQKGDEAQIKPGTAKPEEKVAAVEKAKSDKPVKEEAPKDTTKVQEEPRKPAVPAVTPIEFATVNEGDEAVVQELVKTFNDIITVIGADESAHKFSGTIIKAKDELQKIGEKIIAIRDEARNAAQEEIKEAHATFDESARELIRRFEEARASDAAQYREEFELEREKLAHAYQEKIRTELLRAQEVAEQRLQNELVEQAIELNRKYLHEVKDLVEREREGRLSKLNELTTNVTELEKLTTDWKEVIDTNLKTQQLQVAVDAVRSVLERSTVPRPFVRELVAVKELAAEDPVVEAAIASINPTAYQRGIPSTAQIIERFRRVADEVRKASLLPEDAGIASHAASLVLSKVMFKKDAVAGSDDVESILIRTESLLEEGNIDAAAREMNTLKGWAKILSKDWLGDVRRVLEVKQALEVIETEARLQCLRVE</sequence>
<protein>
    <recommendedName>
        <fullName>MICOS complex subunit mic60</fullName>
    </recommendedName>
    <alternativeName>
        <fullName>Mitofilin</fullName>
    </alternativeName>
</protein>
<evidence type="ECO:0000250" key="1"/>
<evidence type="ECO:0000255" key="2"/>
<evidence type="ECO:0000256" key="3">
    <source>
        <dbReference type="SAM" id="MobiDB-lite"/>
    </source>
</evidence>
<evidence type="ECO:0000305" key="4"/>
<gene>
    <name type="primary">mic60</name>
    <name type="ORF">ACLA_047390</name>
</gene>
<feature type="transit peptide" description="Mitochondrion" evidence="2">
    <location>
        <begin position="1"/>
        <end position="41"/>
    </location>
</feature>
<feature type="chain" id="PRO_0000406644" description="MICOS complex subunit mic60">
    <location>
        <begin position="42"/>
        <end position="628"/>
    </location>
</feature>
<feature type="topological domain" description="Mitochondrial matrix" evidence="2">
    <location>
        <begin position="42"/>
        <end position="99"/>
    </location>
</feature>
<feature type="transmembrane region" description="Helical" evidence="2">
    <location>
        <begin position="100"/>
        <end position="120"/>
    </location>
</feature>
<feature type="topological domain" description="Mitochondrial intermembrane" evidence="2">
    <location>
        <begin position="121"/>
        <end position="628"/>
    </location>
</feature>
<feature type="region of interest" description="Disordered" evidence="3">
    <location>
        <begin position="1"/>
        <end position="30"/>
    </location>
</feature>
<feature type="region of interest" description="Disordered" evidence="3">
    <location>
        <begin position="44"/>
        <end position="92"/>
    </location>
</feature>
<feature type="region of interest" description="Disordered" evidence="3">
    <location>
        <begin position="183"/>
        <end position="252"/>
    </location>
</feature>
<feature type="coiled-coil region" evidence="2">
    <location>
        <begin position="301"/>
        <end position="444"/>
    </location>
</feature>
<feature type="compositionally biased region" description="Polar residues" evidence="3">
    <location>
        <begin position="1"/>
        <end position="24"/>
    </location>
</feature>
<feature type="compositionally biased region" description="Pro residues" evidence="3">
    <location>
        <begin position="47"/>
        <end position="56"/>
    </location>
</feature>
<feature type="compositionally biased region" description="Pro residues" evidence="3">
    <location>
        <begin position="80"/>
        <end position="90"/>
    </location>
</feature>
<feature type="compositionally biased region" description="Basic and acidic residues" evidence="3">
    <location>
        <begin position="216"/>
        <end position="250"/>
    </location>
</feature>
<keyword id="KW-0175">Coiled coil</keyword>
<keyword id="KW-0472">Membrane</keyword>
<keyword id="KW-0496">Mitochondrion</keyword>
<keyword id="KW-0999">Mitochondrion inner membrane</keyword>
<keyword id="KW-1185">Reference proteome</keyword>
<keyword id="KW-0809">Transit peptide</keyword>
<keyword id="KW-0812">Transmembrane</keyword>
<keyword id="KW-1133">Transmembrane helix</keyword>
<accession>A1CHB5</accession>
<name>MIC60_ASPCL</name>
<comment type="function">
    <text evidence="1">Component of the MICOS complex, a large protein complex of the mitochondrial inner membrane that plays crucial roles in the maintenance of crista junctions, inner membrane architecture, and formation of contact sites to the outer membrane. Plays a role in keeping cristae membranes connected to the inner boundary membrane. Also promotes protein import via the mitochondrial intermembrane space assembly (MIA) pathway (By similarity).</text>
</comment>
<comment type="subunit">
    <text evidence="1">Component of the mitochondrial contact site and cristae organizing system (MICOS) complex.</text>
</comment>
<comment type="subcellular location">
    <subcellularLocation>
        <location evidence="1">Mitochondrion inner membrane</location>
        <topology evidence="1">Single-pass membrane protein</topology>
    </subcellularLocation>
</comment>
<comment type="similarity">
    <text evidence="4">Belongs to the MICOS complex subunit Mic60 family.</text>
</comment>
<organism>
    <name type="scientific">Aspergillus clavatus (strain ATCC 1007 / CBS 513.65 / DSM 816 / NCTC 3887 / NRRL 1 / QM 1276 / 107)</name>
    <dbReference type="NCBI Taxonomy" id="344612"/>
    <lineage>
        <taxon>Eukaryota</taxon>
        <taxon>Fungi</taxon>
        <taxon>Dikarya</taxon>
        <taxon>Ascomycota</taxon>
        <taxon>Pezizomycotina</taxon>
        <taxon>Eurotiomycetes</taxon>
        <taxon>Eurotiomycetidae</taxon>
        <taxon>Eurotiales</taxon>
        <taxon>Aspergillaceae</taxon>
        <taxon>Aspergillus</taxon>
        <taxon>Aspergillus subgen. Fumigati</taxon>
    </lineage>
</organism>